<evidence type="ECO:0000250" key="1">
    <source>
        <dbReference type="UniProtKB" id="A0A059TC02"/>
    </source>
</evidence>
<evidence type="ECO:0000250" key="2">
    <source>
        <dbReference type="UniProtKB" id="P51110"/>
    </source>
</evidence>
<evidence type="ECO:0000250" key="3">
    <source>
        <dbReference type="UniProtKB" id="P53199"/>
    </source>
</evidence>
<evidence type="ECO:0000250" key="4">
    <source>
        <dbReference type="UniProtKB" id="Q12068"/>
    </source>
</evidence>
<evidence type="ECO:0000305" key="5"/>
<evidence type="ECO:0000305" key="6">
    <source>
    </source>
</evidence>
<accession>Q4X017</accession>
<proteinExistence type="inferred from homology"/>
<sequence>MPQKRPTLELGSVLVVGGCGFLGWHIVDQLLNFPSETDASVALPKPEGDSRFDNPRLADRYPRCVAKVSVLDLRTANNRLPGAQYYDGDITSEESLLAIFRKVKPDVVIHTATANVLEGNKELLRKVNVDGTKTLLEVAGGDRGDWGGKCKAFVYTSSASVLHDTQSDLKNVNEDWPLIRGKLQLEYYSDTKAEAEEIVLKYNRASPSSMVTCALRPAGIYGEKDTTFTFKVLEHAAKASPTVLRMQLGDNNNLFDFTYVGNVAYSHLLAAYRLLATQTRYESGQSGPLDHEKVDGEAFNITNDSPVYFWDITRAAWALAGKVVEPNQVWQLSEDLLGPVGAVLETVFGLIGKTPRLTRRIVRYSCMTRYYSCEKAKYRLGYSPIVSVPEGLSRAVGYVLARERLESEKKGL</sequence>
<name>ERG26_ASPFU</name>
<reference key="1">
    <citation type="journal article" date="2005" name="Nature">
        <title>Genomic sequence of the pathogenic and allergenic filamentous fungus Aspergillus fumigatus.</title>
        <authorList>
            <person name="Nierman W.C."/>
            <person name="Pain A."/>
            <person name="Anderson M.J."/>
            <person name="Wortman J.R."/>
            <person name="Kim H.S."/>
            <person name="Arroyo J."/>
            <person name="Berriman M."/>
            <person name="Abe K."/>
            <person name="Archer D.B."/>
            <person name="Bermejo C."/>
            <person name="Bennett J.W."/>
            <person name="Bowyer P."/>
            <person name="Chen D."/>
            <person name="Collins M."/>
            <person name="Coulsen R."/>
            <person name="Davies R."/>
            <person name="Dyer P.S."/>
            <person name="Farman M.L."/>
            <person name="Fedorova N."/>
            <person name="Fedorova N.D."/>
            <person name="Feldblyum T.V."/>
            <person name="Fischer R."/>
            <person name="Fosker N."/>
            <person name="Fraser A."/>
            <person name="Garcia J.L."/>
            <person name="Garcia M.J."/>
            <person name="Goble A."/>
            <person name="Goldman G.H."/>
            <person name="Gomi K."/>
            <person name="Griffith-Jones S."/>
            <person name="Gwilliam R."/>
            <person name="Haas B.J."/>
            <person name="Haas H."/>
            <person name="Harris D.E."/>
            <person name="Horiuchi H."/>
            <person name="Huang J."/>
            <person name="Humphray S."/>
            <person name="Jimenez J."/>
            <person name="Keller N."/>
            <person name="Khouri H."/>
            <person name="Kitamoto K."/>
            <person name="Kobayashi T."/>
            <person name="Konzack S."/>
            <person name="Kulkarni R."/>
            <person name="Kumagai T."/>
            <person name="Lafton A."/>
            <person name="Latge J.-P."/>
            <person name="Li W."/>
            <person name="Lord A."/>
            <person name="Lu C."/>
            <person name="Majoros W.H."/>
            <person name="May G.S."/>
            <person name="Miller B.L."/>
            <person name="Mohamoud Y."/>
            <person name="Molina M."/>
            <person name="Monod M."/>
            <person name="Mouyna I."/>
            <person name="Mulligan S."/>
            <person name="Murphy L.D."/>
            <person name="O'Neil S."/>
            <person name="Paulsen I."/>
            <person name="Penalva M.A."/>
            <person name="Pertea M."/>
            <person name="Price C."/>
            <person name="Pritchard B.L."/>
            <person name="Quail M.A."/>
            <person name="Rabbinowitsch E."/>
            <person name="Rawlins N."/>
            <person name="Rajandream M.A."/>
            <person name="Reichard U."/>
            <person name="Renauld H."/>
            <person name="Robson G.D."/>
            <person name="Rodriguez de Cordoba S."/>
            <person name="Rodriguez-Pena J.M."/>
            <person name="Ronning C.M."/>
            <person name="Rutter S."/>
            <person name="Salzberg S.L."/>
            <person name="Sanchez M."/>
            <person name="Sanchez-Ferrero J.C."/>
            <person name="Saunders D."/>
            <person name="Seeger K."/>
            <person name="Squares R."/>
            <person name="Squares S."/>
            <person name="Takeuchi M."/>
            <person name="Tekaia F."/>
            <person name="Turner G."/>
            <person name="Vazquez de Aldana C.R."/>
            <person name="Weidman J."/>
            <person name="White O."/>
            <person name="Woodward J.R."/>
            <person name="Yu J.-H."/>
            <person name="Fraser C.M."/>
            <person name="Galagan J.E."/>
            <person name="Asai K."/>
            <person name="Machida M."/>
            <person name="Hall N."/>
            <person name="Barrell B.G."/>
            <person name="Denning D.W."/>
        </authorList>
    </citation>
    <scope>NUCLEOTIDE SEQUENCE [LARGE SCALE GENOMIC DNA]</scope>
    <source>
        <strain>ATCC MYA-4609 / CBS 101355 / FGSC A1100 / Af293</strain>
    </source>
</reference>
<reference key="2">
    <citation type="journal article" date="2008" name="Steroids">
        <title>Ergosterol biosynthesis pathway in Aspergillus fumigatus.</title>
        <authorList>
            <person name="Alcazar-Fuoli L."/>
            <person name="Mellado E."/>
            <person name="Garcia-Effron G."/>
            <person name="Lopez J.F."/>
            <person name="Grimalt J.O."/>
            <person name="Cuenca-Estrella J.M."/>
            <person name="Rodriguez-Tudela J.L."/>
        </authorList>
    </citation>
    <scope>FUNCTION</scope>
</reference>
<keyword id="KW-0256">Endoplasmic reticulum</keyword>
<keyword id="KW-0444">Lipid biosynthesis</keyword>
<keyword id="KW-0443">Lipid metabolism</keyword>
<keyword id="KW-0472">Membrane</keyword>
<keyword id="KW-0520">NAD</keyword>
<keyword id="KW-0521">NADP</keyword>
<keyword id="KW-0560">Oxidoreductase</keyword>
<keyword id="KW-1185">Reference proteome</keyword>
<keyword id="KW-0752">Steroid biosynthesis</keyword>
<protein>
    <recommendedName>
        <fullName evidence="3">Sterol-4-alpha-carboxylate 3-dehydrogenase erg26, decarboxylating</fullName>
        <ecNumber evidence="3">1.1.1.-</ecNumber>
    </recommendedName>
    <alternativeName>
        <fullName evidence="3">C-3 sterol dehydrogenase erg26</fullName>
    </alternativeName>
    <alternativeName>
        <fullName evidence="3">C-4 decarboxylase erg26</fullName>
    </alternativeName>
    <alternativeName>
        <fullName evidence="3">Ergosterol biosynthetic protein 26</fullName>
    </alternativeName>
</protein>
<gene>
    <name evidence="3" type="primary">erg26</name>
    <name type="ORF">AFUA_2G15030</name>
</gene>
<dbReference type="EC" id="1.1.1.-" evidence="3"/>
<dbReference type="EMBL" id="AAHF01000001">
    <property type="protein sequence ID" value="EAL93798.1"/>
    <property type="molecule type" value="Genomic_DNA"/>
</dbReference>
<dbReference type="RefSeq" id="XP_755836.1">
    <property type="nucleotide sequence ID" value="XM_750743.1"/>
</dbReference>
<dbReference type="SMR" id="Q4X017"/>
<dbReference type="FunCoup" id="Q4X017">
    <property type="interactions" value="399"/>
</dbReference>
<dbReference type="STRING" id="330879.Q4X017"/>
<dbReference type="EnsemblFungi" id="EAL93798">
    <property type="protein sequence ID" value="EAL93798"/>
    <property type="gene ID" value="AFUA_2G15030"/>
</dbReference>
<dbReference type="GeneID" id="3512963"/>
<dbReference type="KEGG" id="afm:AFUA_2G15030"/>
<dbReference type="VEuPathDB" id="FungiDB:Afu2g15030"/>
<dbReference type="eggNOG" id="KOG1430">
    <property type="taxonomic scope" value="Eukaryota"/>
</dbReference>
<dbReference type="HOGENOM" id="CLU_007383_6_8_1"/>
<dbReference type="InParanoid" id="Q4X017"/>
<dbReference type="OMA" id="EAERWCV"/>
<dbReference type="OrthoDB" id="10058185at2759"/>
<dbReference type="UniPathway" id="UPA00768"/>
<dbReference type="Proteomes" id="UP000002530">
    <property type="component" value="Chromosome 2"/>
</dbReference>
<dbReference type="GO" id="GO:0005783">
    <property type="term" value="C:endoplasmic reticulum"/>
    <property type="evidence" value="ECO:0000318"/>
    <property type="project" value="GO_Central"/>
</dbReference>
<dbReference type="GO" id="GO:0005789">
    <property type="term" value="C:endoplasmic reticulum membrane"/>
    <property type="evidence" value="ECO:0007669"/>
    <property type="project" value="UniProtKB-SubCell"/>
</dbReference>
<dbReference type="GO" id="GO:0000252">
    <property type="term" value="F:3-beta-hydroxysteroid dehydrogenase [NAD(P)+]/C4-decarboxylase activity"/>
    <property type="evidence" value="ECO:0000318"/>
    <property type="project" value="GO_Central"/>
</dbReference>
<dbReference type="GO" id="GO:0006696">
    <property type="term" value="P:ergosterol biosynthetic process"/>
    <property type="evidence" value="ECO:0000318"/>
    <property type="project" value="GO_Central"/>
</dbReference>
<dbReference type="FunFam" id="3.40.50.720:FF:000346">
    <property type="entry name" value="C-3 sterol dehydrogenase/C-4 decarboxylase"/>
    <property type="match status" value="1"/>
</dbReference>
<dbReference type="Gene3D" id="3.40.50.720">
    <property type="entry name" value="NAD(P)-binding Rossmann-like Domain"/>
    <property type="match status" value="1"/>
</dbReference>
<dbReference type="InterPro" id="IPR002225">
    <property type="entry name" value="3Beta_OHSteriod_DH/Estase"/>
</dbReference>
<dbReference type="InterPro" id="IPR050177">
    <property type="entry name" value="Lipid_A_modif_metabolic_enz"/>
</dbReference>
<dbReference type="InterPro" id="IPR036291">
    <property type="entry name" value="NAD(P)-bd_dom_sf"/>
</dbReference>
<dbReference type="PANTHER" id="PTHR43245">
    <property type="entry name" value="BIFUNCTIONAL POLYMYXIN RESISTANCE PROTEIN ARNA"/>
    <property type="match status" value="1"/>
</dbReference>
<dbReference type="PANTHER" id="PTHR43245:SF51">
    <property type="entry name" value="SHORT CHAIN DEHYDROGENASE_REDUCTASE FAMILY 42E, MEMBER 2"/>
    <property type="match status" value="1"/>
</dbReference>
<dbReference type="Pfam" id="PF01073">
    <property type="entry name" value="3Beta_HSD"/>
    <property type="match status" value="1"/>
</dbReference>
<dbReference type="SUPFAM" id="SSF51735">
    <property type="entry name" value="NAD(P)-binding Rossmann-fold domains"/>
    <property type="match status" value="1"/>
</dbReference>
<organism>
    <name type="scientific">Aspergillus fumigatus (strain ATCC MYA-4609 / CBS 101355 / FGSC A1100 / Af293)</name>
    <name type="common">Neosartorya fumigata</name>
    <dbReference type="NCBI Taxonomy" id="330879"/>
    <lineage>
        <taxon>Eukaryota</taxon>
        <taxon>Fungi</taxon>
        <taxon>Dikarya</taxon>
        <taxon>Ascomycota</taxon>
        <taxon>Pezizomycotina</taxon>
        <taxon>Eurotiomycetes</taxon>
        <taxon>Eurotiomycetidae</taxon>
        <taxon>Eurotiales</taxon>
        <taxon>Aspergillaceae</taxon>
        <taxon>Aspergillus</taxon>
        <taxon>Aspergillus subgen. Fumigati</taxon>
    </lineage>
</organism>
<comment type="function">
    <text evidence="3 6">Sterol-C4-methyl oxidase; part of the third module of ergosterol biosynthesis pathway that includes the late steps of the pathway (By similarity). Erg26 is a catalytic component of the C-4 demethylation complex that catalyzes the conversion of 4,4-dimethylfecosterol into fecosterol via 4-methylfecosterol (By similarity). The third module or late pathway involves the ergosterol synthesis itself through consecutive reactions that mainly occur in the endoplasmic reticulum (ER) membrane. Firstly, the squalene synthase erg9 catalyzes the condensation of 2 farnesyl pyrophosphate moieties to form squalene, which is the precursor of all steroids. Squalene synthase is crucial for balancing the incorporation of farnesyl diphosphate (FPP) into sterol and nonsterol isoprene synthesis. Secondly, squalene is converted into lanosterol by the consecutive action of the squalene epoxidase erg1 and the lanosterol synthase erg7. Then, the delta(24)-sterol C-methyltransferase erg6 methylates lanosterol at C-24 to produce eburicol. Eburicol is the substrate of the sterol 14-alpha demethylase encoded by cyp51A and cyp51B, to yield 4,4,24-trimethyl ergosta-8,14,24(28)-trienol. The C-14 reductase erg24 then reduces the C14=C15 double bond which leads to 4,4-dimethylfecosterol. A sequence of further demethylations at C-4, involving the C-4 demethylation complex containing the C-4 methylsterol oxidases erg25A or erg25B, the sterol-4-alpha-carboxylate 3-dehydrogenase erg26 and the 3-keto-steroid reductase erg27, leads to the production of fecosterol via 4-methylfecosterol. The C-8 sterol isomerase erg2 then catalyzes the reaction which results in unsaturation at C-7 in the B ring of sterols and thus converts fecosterol to episterol. The sterol-C5-desaturase erg3B then catalyzes the introduction of a C-5 double bond in the B ring to produce 5-dehydroepisterol. The 2 other sterol-C5-desaturases, erg3A and erg3C, seem to be less important in ergosterol biosynthesis. The C-22 sterol desaturase erg5 further converts 5-dehydroepisterol into ergosta-5,7,22,24(28)-tetraen-3beta-ol by forming the C-22(23) double bond in the sterol side chain. Finally, ergosta-5,7,22,24(28)-tetraen-3beta-ol is substrate of the C-24(28) sterol reductases erg4A and erg4B to produce ergosterol. Possible alternative sterol biosynthetic pathways might exist from fecosterol to ergosterol, depending on the activities of the erg3 isoforms (Probable) (PubMed:18191972).</text>
</comment>
<comment type="pathway">
    <text evidence="3">Steroid metabolism; ergosterol biosynthesis.</text>
</comment>
<comment type="subunit">
    <text evidence="3">Heterotetramer of erg25, erg26, erg27 and erg28 (By similarity). Erg28 acts as a scaffold to tether erg27 and other 4,4-demethylation-related enzymes, forming a demethylation enzyme complex, in the endoplasmic reticulum (By similarity).</text>
</comment>
<comment type="subcellular location">
    <subcellularLocation>
        <location evidence="3">Endoplasmic reticulum membrane</location>
        <topology evidence="3">Peripheral membrane protein</topology>
    </subcellularLocation>
</comment>
<comment type="miscellaneous">
    <text evidence="6">In Aspergillus, the biosynthesis pathway of the sterol precursors leading to the prevalent sterol ergosterol differs from yeast. The ring system of lanosterol in S.cerevisiae is firstly demethylised in three enzymatic steps leading to the intermediate zymosterol and secondly a methyl group is added to zymosterol by the sterol 24-C-methyltransferase to form fecosterol. In Aspergillus, lanosterol is firstly transmethylated by the sterol 24-C-methyltransferase leading to the intermediate eburicol and secondly demethylated in three steps to form fecosterol.</text>
</comment>
<comment type="similarity">
    <text evidence="5">Belongs to the 3-beta-HSD family.</text>
</comment>
<feature type="chain" id="PRO_0000454370" description="Sterol-4-alpha-carboxylate 3-dehydrogenase erg26, decarboxylating">
    <location>
        <begin position="1"/>
        <end position="412"/>
    </location>
</feature>
<feature type="active site" description="Proton donor" evidence="4">
    <location>
        <position position="192"/>
    </location>
</feature>
<feature type="binding site" evidence="2">
    <location>
        <begin position="17"/>
        <end position="23"/>
    </location>
    <ligand>
        <name>NADP(+)</name>
        <dbReference type="ChEBI" id="CHEBI:58349"/>
    </ligand>
</feature>
<feature type="binding site" evidence="2">
    <location>
        <begin position="89"/>
        <end position="90"/>
    </location>
    <ligand>
        <name>NADP(+)</name>
        <dbReference type="ChEBI" id="CHEBI:58349"/>
    </ligand>
</feature>
<feature type="binding site" evidence="2">
    <location>
        <begin position="111"/>
        <end position="113"/>
    </location>
    <ligand>
        <name>NADP(+)</name>
        <dbReference type="ChEBI" id="CHEBI:58349"/>
    </ligand>
</feature>
<feature type="binding site" evidence="2">
    <location>
        <position position="158"/>
    </location>
    <ligand>
        <name>substrate</name>
    </ligand>
</feature>
<feature type="binding site" evidence="1">
    <location>
        <position position="188"/>
    </location>
    <ligand>
        <name>NADP(+)</name>
        <dbReference type="ChEBI" id="CHEBI:58349"/>
    </ligand>
</feature>
<feature type="binding site" evidence="2">
    <location>
        <position position="188"/>
    </location>
    <ligand>
        <name>substrate</name>
    </ligand>
</feature>
<feature type="binding site" evidence="2">
    <location>
        <position position="192"/>
    </location>
    <ligand>
        <name>NADP(+)</name>
        <dbReference type="ChEBI" id="CHEBI:58349"/>
    </ligand>
</feature>
<feature type="binding site" evidence="2">
    <location>
        <begin position="217"/>
        <end position="220"/>
    </location>
    <ligand>
        <name>NADP(+)</name>
        <dbReference type="ChEBI" id="CHEBI:58349"/>
    </ligand>
</feature>